<name>GLGS_ECO7I</name>
<dbReference type="EMBL" id="CU928164">
    <property type="protein sequence ID" value="CAR19661.1"/>
    <property type="molecule type" value="Genomic_DNA"/>
</dbReference>
<dbReference type="RefSeq" id="WP_000350095.1">
    <property type="nucleotide sequence ID" value="NC_011750.1"/>
</dbReference>
<dbReference type="RefSeq" id="YP_002409449.1">
    <property type="nucleotide sequence ID" value="NC_011750.1"/>
</dbReference>
<dbReference type="SMR" id="B7NJR2"/>
<dbReference type="STRING" id="585057.ECIAI39_3545"/>
<dbReference type="GeneID" id="93778946"/>
<dbReference type="KEGG" id="ect:ECIAI39_3545"/>
<dbReference type="PATRIC" id="fig|585057.6.peg.3673"/>
<dbReference type="HOGENOM" id="CLU_185971_0_0_6"/>
<dbReference type="Proteomes" id="UP000000749">
    <property type="component" value="Chromosome"/>
</dbReference>
<dbReference type="GO" id="GO:1902201">
    <property type="term" value="P:negative regulation of bacterial-type flagellum-dependent cell motility"/>
    <property type="evidence" value="ECO:0007669"/>
    <property type="project" value="UniProtKB-UniRule"/>
</dbReference>
<dbReference type="GO" id="GO:1900191">
    <property type="term" value="P:negative regulation of single-species biofilm formation"/>
    <property type="evidence" value="ECO:0007669"/>
    <property type="project" value="UniProtKB-UniRule"/>
</dbReference>
<dbReference type="FunFam" id="1.20.970.20:FF:000001">
    <property type="entry name" value="Surface composition regulator"/>
    <property type="match status" value="1"/>
</dbReference>
<dbReference type="Gene3D" id="1.20.970.20">
    <property type="entry name" value="Glycogen synthesis protein GlgS"/>
    <property type="match status" value="1"/>
</dbReference>
<dbReference type="HAMAP" id="MF_00525">
    <property type="entry name" value="GlgS"/>
    <property type="match status" value="1"/>
</dbReference>
<dbReference type="InterPro" id="IPR015065">
    <property type="entry name" value="GlgS"/>
</dbReference>
<dbReference type="InterPro" id="IPR036295">
    <property type="entry name" value="GlgS_sf"/>
</dbReference>
<dbReference type="NCBIfam" id="NF002793">
    <property type="entry name" value="PRK02922.1"/>
    <property type="match status" value="1"/>
</dbReference>
<dbReference type="Pfam" id="PF08971">
    <property type="entry name" value="GlgS"/>
    <property type="match status" value="1"/>
</dbReference>
<dbReference type="SUPFAM" id="SSF109747">
    <property type="entry name" value="Glycogen synthesis protein GlgS"/>
    <property type="match status" value="1"/>
</dbReference>
<proteinExistence type="inferred from homology"/>
<evidence type="ECO:0000255" key="1">
    <source>
        <dbReference type="HAMAP-Rule" id="MF_00525"/>
    </source>
</evidence>
<gene>
    <name evidence="1" type="primary">glgS</name>
    <name type="ordered locus">ECIAI39_3545</name>
</gene>
<feature type="chain" id="PRO_1000127736" description="Surface composition regulator">
    <location>
        <begin position="1"/>
        <end position="66"/>
    </location>
</feature>
<sequence length="66" mass="7892">MDHSLNSLNNFDFLARSFARMHAEGRPVDILAVTGNMDEEHRTWFCARYAWYCQQMMQARELELEH</sequence>
<reference key="1">
    <citation type="journal article" date="2009" name="PLoS Genet.">
        <title>Organised genome dynamics in the Escherichia coli species results in highly diverse adaptive paths.</title>
        <authorList>
            <person name="Touchon M."/>
            <person name="Hoede C."/>
            <person name="Tenaillon O."/>
            <person name="Barbe V."/>
            <person name="Baeriswyl S."/>
            <person name="Bidet P."/>
            <person name="Bingen E."/>
            <person name="Bonacorsi S."/>
            <person name="Bouchier C."/>
            <person name="Bouvet O."/>
            <person name="Calteau A."/>
            <person name="Chiapello H."/>
            <person name="Clermont O."/>
            <person name="Cruveiller S."/>
            <person name="Danchin A."/>
            <person name="Diard M."/>
            <person name="Dossat C."/>
            <person name="Karoui M.E."/>
            <person name="Frapy E."/>
            <person name="Garry L."/>
            <person name="Ghigo J.M."/>
            <person name="Gilles A.M."/>
            <person name="Johnson J."/>
            <person name="Le Bouguenec C."/>
            <person name="Lescat M."/>
            <person name="Mangenot S."/>
            <person name="Martinez-Jehanne V."/>
            <person name="Matic I."/>
            <person name="Nassif X."/>
            <person name="Oztas S."/>
            <person name="Petit M.A."/>
            <person name="Pichon C."/>
            <person name="Rouy Z."/>
            <person name="Ruf C.S."/>
            <person name="Schneider D."/>
            <person name="Tourret J."/>
            <person name="Vacherie B."/>
            <person name="Vallenet D."/>
            <person name="Medigue C."/>
            <person name="Rocha E.P.C."/>
            <person name="Denamur E."/>
        </authorList>
    </citation>
    <scope>NUCLEOTIDE SEQUENCE [LARGE SCALE GENOMIC DNA]</scope>
    <source>
        <strain>IAI39 / ExPEC</strain>
    </source>
</reference>
<comment type="function">
    <text evidence="1">Major determinant of cell surface composition. Negatively regulates motility, adhesion and synthesis of biofilm exopolysaccharides.</text>
</comment>
<comment type="similarity">
    <text evidence="1">Belongs to the GlgS family.</text>
</comment>
<organism>
    <name type="scientific">Escherichia coli O7:K1 (strain IAI39 / ExPEC)</name>
    <dbReference type="NCBI Taxonomy" id="585057"/>
    <lineage>
        <taxon>Bacteria</taxon>
        <taxon>Pseudomonadati</taxon>
        <taxon>Pseudomonadota</taxon>
        <taxon>Gammaproteobacteria</taxon>
        <taxon>Enterobacterales</taxon>
        <taxon>Enterobacteriaceae</taxon>
        <taxon>Escherichia</taxon>
    </lineage>
</organism>
<accession>B7NJR2</accession>
<protein>
    <recommendedName>
        <fullName evidence="1">Surface composition regulator</fullName>
    </recommendedName>
</protein>